<feature type="peptide" id="PRO_0000043559" description="Ranatuerin-2BYb">
    <location>
        <begin position="1"/>
        <end position="28"/>
    </location>
</feature>
<feature type="disulfide bond" evidence="1">
    <location>
        <begin position="23"/>
        <end position="28"/>
    </location>
</feature>
<dbReference type="GO" id="GO:0005576">
    <property type="term" value="C:extracellular region"/>
    <property type="evidence" value="ECO:0007669"/>
    <property type="project" value="UniProtKB-SubCell"/>
</dbReference>
<dbReference type="GO" id="GO:0042742">
    <property type="term" value="P:defense response to bacterium"/>
    <property type="evidence" value="ECO:0007669"/>
    <property type="project" value="UniProtKB-KW"/>
</dbReference>
<dbReference type="GO" id="GO:0031640">
    <property type="term" value="P:killing of cells of another organism"/>
    <property type="evidence" value="ECO:0007669"/>
    <property type="project" value="UniProtKB-KW"/>
</dbReference>
<dbReference type="InterPro" id="IPR012521">
    <property type="entry name" value="Antimicrobial_frog_2"/>
</dbReference>
<dbReference type="Pfam" id="PF08023">
    <property type="entry name" value="Antimicrobial_2"/>
    <property type="match status" value="1"/>
</dbReference>
<proteinExistence type="evidence at protein level"/>
<sequence length="28" mass="2878">GIMDSVKGLAKNLAGKLLDSLKCKITGC</sequence>
<reference evidence="2" key="1">
    <citation type="journal article" date="2003" name="J. Pept. Res.">
        <title>Isolation of peptides of the brevinin-1 family with potent candidacidal activity from the skin secretions of the frog Rana boylii.</title>
        <authorList>
            <person name="Conlon J.M."/>
            <person name="Sonnevend A."/>
            <person name="Patel M."/>
            <person name="Davidson C."/>
            <person name="Nielsen P.F."/>
            <person name="Pal T."/>
            <person name="Rollins-Smith L.A."/>
        </authorList>
    </citation>
    <scope>PROTEIN SEQUENCE</scope>
    <scope>FUNCTION</scope>
    <scope>MASS SPECTROMETRY</scope>
    <source>
        <tissue evidence="1">Skin secretion</tissue>
    </source>
</reference>
<protein>
    <recommendedName>
        <fullName>Ranatuerin-2BYb</fullName>
    </recommendedName>
</protein>
<organism>
    <name type="scientific">Rana boylii</name>
    <name type="common">Foothill yellow-legged frog</name>
    <dbReference type="NCBI Taxonomy" id="160499"/>
    <lineage>
        <taxon>Eukaryota</taxon>
        <taxon>Metazoa</taxon>
        <taxon>Chordata</taxon>
        <taxon>Craniata</taxon>
        <taxon>Vertebrata</taxon>
        <taxon>Euteleostomi</taxon>
        <taxon>Amphibia</taxon>
        <taxon>Batrachia</taxon>
        <taxon>Anura</taxon>
        <taxon>Neobatrachia</taxon>
        <taxon>Ranoidea</taxon>
        <taxon>Ranidae</taxon>
        <taxon>Rana</taxon>
        <taxon>Rana</taxon>
    </lineage>
</organism>
<name>RN2B_RANBO</name>
<accession>P84115</accession>
<keyword id="KW-0878">Amphibian defense peptide</keyword>
<keyword id="KW-0044">Antibiotic</keyword>
<keyword id="KW-0929">Antimicrobial</keyword>
<keyword id="KW-0204">Cytolysis</keyword>
<keyword id="KW-0903">Direct protein sequencing</keyword>
<keyword id="KW-1015">Disulfide bond</keyword>
<keyword id="KW-0354">Hemolysis</keyword>
<keyword id="KW-0964">Secreted</keyword>
<comment type="function">
    <text evidence="1">Antibacterial activity against Gram-negative bacterium E.coli. Very weak hemolysis activity.</text>
</comment>
<comment type="subcellular location">
    <subcellularLocation>
        <location evidence="1">Secreted</location>
    </subcellularLocation>
</comment>
<comment type="tissue specificity">
    <text>Expressed by the skin glands.</text>
</comment>
<comment type="mass spectrometry" mass="2873.3" method="MALDI" evidence="1"/>
<comment type="similarity">
    <text evidence="1">Belongs to the frog skin active peptide (FSAP) family. Ranatuerin subfamily.</text>
</comment>
<evidence type="ECO:0000269" key="1">
    <source>
    </source>
</evidence>
<evidence type="ECO:0000305" key="2"/>